<gene>
    <name evidence="1" type="primary">trpD</name>
    <name type="ordered locus">Adeh_4054</name>
</gene>
<feature type="chain" id="PRO_1000042987" description="Anthranilate phosphoribosyltransferase">
    <location>
        <begin position="1"/>
        <end position="337"/>
    </location>
</feature>
<feature type="binding site" evidence="1">
    <location>
        <position position="80"/>
    </location>
    <ligand>
        <name>5-phospho-alpha-D-ribose 1-diphosphate</name>
        <dbReference type="ChEBI" id="CHEBI:58017"/>
    </ligand>
</feature>
<feature type="binding site" evidence="1">
    <location>
        <position position="80"/>
    </location>
    <ligand>
        <name>anthranilate</name>
        <dbReference type="ChEBI" id="CHEBI:16567"/>
        <label>1</label>
    </ligand>
</feature>
<feature type="binding site" evidence="1">
    <location>
        <begin position="83"/>
        <end position="84"/>
    </location>
    <ligand>
        <name>5-phospho-alpha-D-ribose 1-diphosphate</name>
        <dbReference type="ChEBI" id="CHEBI:58017"/>
    </ligand>
</feature>
<feature type="binding site" evidence="1">
    <location>
        <position position="88"/>
    </location>
    <ligand>
        <name>5-phospho-alpha-D-ribose 1-diphosphate</name>
        <dbReference type="ChEBI" id="CHEBI:58017"/>
    </ligand>
</feature>
<feature type="binding site" evidence="1">
    <location>
        <begin position="90"/>
        <end position="93"/>
    </location>
    <ligand>
        <name>5-phospho-alpha-D-ribose 1-diphosphate</name>
        <dbReference type="ChEBI" id="CHEBI:58017"/>
    </ligand>
</feature>
<feature type="binding site" evidence="1">
    <location>
        <position position="92"/>
    </location>
    <ligand>
        <name>Mg(2+)</name>
        <dbReference type="ChEBI" id="CHEBI:18420"/>
        <label>1</label>
    </ligand>
</feature>
<feature type="binding site" evidence="1">
    <location>
        <begin position="108"/>
        <end position="116"/>
    </location>
    <ligand>
        <name>5-phospho-alpha-D-ribose 1-diphosphate</name>
        <dbReference type="ChEBI" id="CHEBI:58017"/>
    </ligand>
</feature>
<feature type="binding site" evidence="1">
    <location>
        <position position="111"/>
    </location>
    <ligand>
        <name>anthranilate</name>
        <dbReference type="ChEBI" id="CHEBI:16567"/>
        <label>1</label>
    </ligand>
</feature>
<feature type="binding site" evidence="1">
    <location>
        <position position="120"/>
    </location>
    <ligand>
        <name>5-phospho-alpha-D-ribose 1-diphosphate</name>
        <dbReference type="ChEBI" id="CHEBI:58017"/>
    </ligand>
</feature>
<feature type="binding site" evidence="1">
    <location>
        <position position="166"/>
    </location>
    <ligand>
        <name>anthranilate</name>
        <dbReference type="ChEBI" id="CHEBI:16567"/>
        <label>2</label>
    </ligand>
</feature>
<feature type="binding site" evidence="1">
    <location>
        <position position="224"/>
    </location>
    <ligand>
        <name>Mg(2+)</name>
        <dbReference type="ChEBI" id="CHEBI:18420"/>
        <label>2</label>
    </ligand>
</feature>
<feature type="binding site" evidence="1">
    <location>
        <position position="225"/>
    </location>
    <ligand>
        <name>Mg(2+)</name>
        <dbReference type="ChEBI" id="CHEBI:18420"/>
        <label>1</label>
    </ligand>
</feature>
<feature type="binding site" evidence="1">
    <location>
        <position position="225"/>
    </location>
    <ligand>
        <name>Mg(2+)</name>
        <dbReference type="ChEBI" id="CHEBI:18420"/>
        <label>2</label>
    </ligand>
</feature>
<sequence length="337" mass="34713">MIQHAIAKLLEGEDLSRAEAAQVMTEIADGGATPAQSGAFLAALRMKGETVEEIAGAADVMRQRADRVRVSRDVFIDTCGTGGDGRHTFNISTTAAFVAAGAGVCVAKHGNRAVSSRSGSADVLAALGVNVDADKETVERCIEEVGIGFLFAVRLHPAFKAIAGVRRELGVRTIFNLLGPLANPAGARHQVLGVYEARWVPVLGGVLAALGAAHAFVVHGEGLDEIAVTGMTHVCEVKDGAVERYTIRPEDLGLPRRDAAELAGGDAAANARIVTHVLEGQQGGPRDAVLANAAAALVCAGAATDLRDGVARAARSIDSGAAREKLRQLVAATTVPA</sequence>
<name>TRPD_ANADE</name>
<evidence type="ECO:0000255" key="1">
    <source>
        <dbReference type="HAMAP-Rule" id="MF_00211"/>
    </source>
</evidence>
<keyword id="KW-0028">Amino-acid biosynthesis</keyword>
<keyword id="KW-0057">Aromatic amino acid biosynthesis</keyword>
<keyword id="KW-0328">Glycosyltransferase</keyword>
<keyword id="KW-0460">Magnesium</keyword>
<keyword id="KW-0479">Metal-binding</keyword>
<keyword id="KW-1185">Reference proteome</keyword>
<keyword id="KW-0808">Transferase</keyword>
<keyword id="KW-0822">Tryptophan biosynthesis</keyword>
<comment type="function">
    <text evidence="1">Catalyzes the transfer of the phosphoribosyl group of 5-phosphorylribose-1-pyrophosphate (PRPP) to anthranilate to yield N-(5'-phosphoribosyl)-anthranilate (PRA).</text>
</comment>
<comment type="catalytic activity">
    <reaction evidence="1">
        <text>N-(5-phospho-beta-D-ribosyl)anthranilate + diphosphate = 5-phospho-alpha-D-ribose 1-diphosphate + anthranilate</text>
        <dbReference type="Rhea" id="RHEA:11768"/>
        <dbReference type="ChEBI" id="CHEBI:16567"/>
        <dbReference type="ChEBI" id="CHEBI:18277"/>
        <dbReference type="ChEBI" id="CHEBI:33019"/>
        <dbReference type="ChEBI" id="CHEBI:58017"/>
        <dbReference type="EC" id="2.4.2.18"/>
    </reaction>
</comment>
<comment type="cofactor">
    <cofactor evidence="1">
        <name>Mg(2+)</name>
        <dbReference type="ChEBI" id="CHEBI:18420"/>
    </cofactor>
    <text evidence="1">Binds 2 magnesium ions per monomer.</text>
</comment>
<comment type="pathway">
    <text evidence="1">Amino-acid biosynthesis; L-tryptophan biosynthesis; L-tryptophan from chorismate: step 2/5.</text>
</comment>
<comment type="subunit">
    <text evidence="1">Homodimer.</text>
</comment>
<comment type="similarity">
    <text evidence="1">Belongs to the anthranilate phosphoribosyltransferase family.</text>
</comment>
<dbReference type="EC" id="2.4.2.18" evidence="1"/>
<dbReference type="EMBL" id="CP000251">
    <property type="protein sequence ID" value="ABC83818.1"/>
    <property type="molecule type" value="Genomic_DNA"/>
</dbReference>
<dbReference type="RefSeq" id="WP_011423100.1">
    <property type="nucleotide sequence ID" value="NC_007760.1"/>
</dbReference>
<dbReference type="SMR" id="Q2IGV6"/>
<dbReference type="STRING" id="290397.Adeh_4054"/>
<dbReference type="KEGG" id="ade:Adeh_4054"/>
<dbReference type="eggNOG" id="COG0547">
    <property type="taxonomic scope" value="Bacteria"/>
</dbReference>
<dbReference type="HOGENOM" id="CLU_034315_2_1_7"/>
<dbReference type="OrthoDB" id="9806430at2"/>
<dbReference type="UniPathway" id="UPA00035">
    <property type="reaction ID" value="UER00041"/>
</dbReference>
<dbReference type="Proteomes" id="UP000001935">
    <property type="component" value="Chromosome"/>
</dbReference>
<dbReference type="GO" id="GO:0005829">
    <property type="term" value="C:cytosol"/>
    <property type="evidence" value="ECO:0007669"/>
    <property type="project" value="TreeGrafter"/>
</dbReference>
<dbReference type="GO" id="GO:0004048">
    <property type="term" value="F:anthranilate phosphoribosyltransferase activity"/>
    <property type="evidence" value="ECO:0007669"/>
    <property type="project" value="UniProtKB-UniRule"/>
</dbReference>
<dbReference type="GO" id="GO:0000287">
    <property type="term" value="F:magnesium ion binding"/>
    <property type="evidence" value="ECO:0007669"/>
    <property type="project" value="UniProtKB-UniRule"/>
</dbReference>
<dbReference type="GO" id="GO:0000162">
    <property type="term" value="P:L-tryptophan biosynthetic process"/>
    <property type="evidence" value="ECO:0007669"/>
    <property type="project" value="UniProtKB-UniRule"/>
</dbReference>
<dbReference type="FunFam" id="3.40.1030.10:FF:000002">
    <property type="entry name" value="Anthranilate phosphoribosyltransferase"/>
    <property type="match status" value="1"/>
</dbReference>
<dbReference type="Gene3D" id="3.40.1030.10">
    <property type="entry name" value="Nucleoside phosphorylase/phosphoribosyltransferase catalytic domain"/>
    <property type="match status" value="1"/>
</dbReference>
<dbReference type="Gene3D" id="1.20.970.10">
    <property type="entry name" value="Transferase, Pyrimidine Nucleoside Phosphorylase, Chain C"/>
    <property type="match status" value="1"/>
</dbReference>
<dbReference type="HAMAP" id="MF_00211">
    <property type="entry name" value="TrpD"/>
    <property type="match status" value="1"/>
</dbReference>
<dbReference type="InterPro" id="IPR005940">
    <property type="entry name" value="Anthranilate_Pribosyl_Tfrase"/>
</dbReference>
<dbReference type="InterPro" id="IPR000312">
    <property type="entry name" value="Glycosyl_Trfase_fam3"/>
</dbReference>
<dbReference type="InterPro" id="IPR017459">
    <property type="entry name" value="Glycosyl_Trfase_fam3_N_dom"/>
</dbReference>
<dbReference type="InterPro" id="IPR036320">
    <property type="entry name" value="Glycosyl_Trfase_fam3_N_dom_sf"/>
</dbReference>
<dbReference type="InterPro" id="IPR035902">
    <property type="entry name" value="Nuc_phospho_transferase"/>
</dbReference>
<dbReference type="NCBIfam" id="TIGR01245">
    <property type="entry name" value="trpD"/>
    <property type="match status" value="1"/>
</dbReference>
<dbReference type="PANTHER" id="PTHR43285">
    <property type="entry name" value="ANTHRANILATE PHOSPHORIBOSYLTRANSFERASE"/>
    <property type="match status" value="1"/>
</dbReference>
<dbReference type="PANTHER" id="PTHR43285:SF2">
    <property type="entry name" value="ANTHRANILATE PHOSPHORIBOSYLTRANSFERASE"/>
    <property type="match status" value="1"/>
</dbReference>
<dbReference type="Pfam" id="PF02885">
    <property type="entry name" value="Glycos_trans_3N"/>
    <property type="match status" value="1"/>
</dbReference>
<dbReference type="Pfam" id="PF00591">
    <property type="entry name" value="Glycos_transf_3"/>
    <property type="match status" value="1"/>
</dbReference>
<dbReference type="SUPFAM" id="SSF52418">
    <property type="entry name" value="Nucleoside phosphorylase/phosphoribosyltransferase catalytic domain"/>
    <property type="match status" value="1"/>
</dbReference>
<dbReference type="SUPFAM" id="SSF47648">
    <property type="entry name" value="Nucleoside phosphorylase/phosphoribosyltransferase N-terminal domain"/>
    <property type="match status" value="1"/>
</dbReference>
<organism>
    <name type="scientific">Anaeromyxobacter dehalogenans (strain 2CP-C)</name>
    <dbReference type="NCBI Taxonomy" id="290397"/>
    <lineage>
        <taxon>Bacteria</taxon>
        <taxon>Pseudomonadati</taxon>
        <taxon>Myxococcota</taxon>
        <taxon>Myxococcia</taxon>
        <taxon>Myxococcales</taxon>
        <taxon>Cystobacterineae</taxon>
        <taxon>Anaeromyxobacteraceae</taxon>
        <taxon>Anaeromyxobacter</taxon>
    </lineage>
</organism>
<reference key="1">
    <citation type="submission" date="2006-01" db="EMBL/GenBank/DDBJ databases">
        <title>Complete sequence of Anaeromyxobacter dehalogenans 2CP-C.</title>
        <authorList>
            <person name="Copeland A."/>
            <person name="Lucas S."/>
            <person name="Lapidus A."/>
            <person name="Barry K."/>
            <person name="Detter J.C."/>
            <person name="Glavina T."/>
            <person name="Hammon N."/>
            <person name="Israni S."/>
            <person name="Pitluck S."/>
            <person name="Brettin T."/>
            <person name="Bruce D."/>
            <person name="Han C."/>
            <person name="Tapia R."/>
            <person name="Gilna P."/>
            <person name="Kiss H."/>
            <person name="Schmutz J."/>
            <person name="Larimer F."/>
            <person name="Land M."/>
            <person name="Kyrpides N."/>
            <person name="Anderson I."/>
            <person name="Sanford R.A."/>
            <person name="Ritalahti K.M."/>
            <person name="Thomas H.S."/>
            <person name="Kirby J.R."/>
            <person name="Zhulin I.B."/>
            <person name="Loeffler F.E."/>
            <person name="Richardson P."/>
        </authorList>
    </citation>
    <scope>NUCLEOTIDE SEQUENCE [LARGE SCALE GENOMIC DNA]</scope>
    <source>
        <strain>2CP-C</strain>
    </source>
</reference>
<accession>Q2IGV6</accession>
<proteinExistence type="inferred from homology"/>
<protein>
    <recommendedName>
        <fullName evidence="1">Anthranilate phosphoribosyltransferase</fullName>
        <ecNumber evidence="1">2.4.2.18</ecNumber>
    </recommendedName>
</protein>